<feature type="chain" id="PRO_0000224175" description="Large ribosomal subunit protein uL23">
    <location>
        <begin position="1"/>
        <end position="91"/>
    </location>
</feature>
<organism>
    <name type="scientific">Staphylococcus aureus (strain MW2)</name>
    <dbReference type="NCBI Taxonomy" id="196620"/>
    <lineage>
        <taxon>Bacteria</taxon>
        <taxon>Bacillati</taxon>
        <taxon>Bacillota</taxon>
        <taxon>Bacilli</taxon>
        <taxon>Bacillales</taxon>
        <taxon>Staphylococcaceae</taxon>
        <taxon>Staphylococcus</taxon>
    </lineage>
</organism>
<sequence length="91" mass="10605">MEARDILKRPVITEKSSEAMAEDKYTFDVDTRVNKTQVKMAVEEIFNVKVASVNIMNYKPKKKRMGRYQGYTNKRRKAIVTLKEGSIDLFN</sequence>
<gene>
    <name evidence="1" type="primary">rplW</name>
    <name type="ordered locus">MW2167</name>
</gene>
<comment type="function">
    <text evidence="1">One of the early assembly proteins it binds 23S rRNA. One of the proteins that surrounds the polypeptide exit tunnel on the outside of the ribosome. Forms the main docking site for trigger factor binding to the ribosome.</text>
</comment>
<comment type="subunit">
    <text evidence="1">Part of the 50S ribosomal subunit. Contacts protein L29, and trigger factor when it is bound to the ribosome.</text>
</comment>
<comment type="similarity">
    <text evidence="1">Belongs to the universal ribosomal protein uL23 family.</text>
</comment>
<reference key="1">
    <citation type="journal article" date="2002" name="Lancet">
        <title>Genome and virulence determinants of high virulence community-acquired MRSA.</title>
        <authorList>
            <person name="Baba T."/>
            <person name="Takeuchi F."/>
            <person name="Kuroda M."/>
            <person name="Yuzawa H."/>
            <person name="Aoki K."/>
            <person name="Oguchi A."/>
            <person name="Nagai Y."/>
            <person name="Iwama N."/>
            <person name="Asano K."/>
            <person name="Naimi T."/>
            <person name="Kuroda H."/>
            <person name="Cui L."/>
            <person name="Yamamoto K."/>
            <person name="Hiramatsu K."/>
        </authorList>
    </citation>
    <scope>NUCLEOTIDE SEQUENCE [LARGE SCALE GENOMIC DNA]</scope>
    <source>
        <strain>MW2</strain>
    </source>
</reference>
<keyword id="KW-0002">3D-structure</keyword>
<keyword id="KW-0687">Ribonucleoprotein</keyword>
<keyword id="KW-0689">Ribosomal protein</keyword>
<keyword id="KW-0694">RNA-binding</keyword>
<keyword id="KW-0699">rRNA-binding</keyword>
<dbReference type="EMBL" id="BA000033">
    <property type="protein sequence ID" value="BAB96032.1"/>
    <property type="molecule type" value="Genomic_DNA"/>
</dbReference>
<dbReference type="RefSeq" id="WP_000388082.1">
    <property type="nucleotide sequence ID" value="NC_003923.1"/>
</dbReference>
<dbReference type="PDB" id="8Y36">
    <property type="method" value="EM"/>
    <property type="resolution" value="2.65 A"/>
    <property type="chains" value="R=2-90"/>
</dbReference>
<dbReference type="PDB" id="8Y37">
    <property type="method" value="EM"/>
    <property type="resolution" value="2.53 A"/>
    <property type="chains" value="R=2-90"/>
</dbReference>
<dbReference type="PDB" id="8Y38">
    <property type="method" value="EM"/>
    <property type="resolution" value="2.58 A"/>
    <property type="chains" value="R=2-90"/>
</dbReference>
<dbReference type="PDB" id="8Y39">
    <property type="method" value="EM"/>
    <property type="resolution" value="3.60 A"/>
    <property type="chains" value="R=2-90"/>
</dbReference>
<dbReference type="PDBsum" id="8Y36"/>
<dbReference type="PDBsum" id="8Y37"/>
<dbReference type="PDBsum" id="8Y38"/>
<dbReference type="PDBsum" id="8Y39"/>
<dbReference type="EMDB" id="EMD-38873"/>
<dbReference type="EMDB" id="EMD-38874"/>
<dbReference type="EMDB" id="EMD-38875"/>
<dbReference type="EMDB" id="EMD-38876"/>
<dbReference type="SMR" id="Q7A078"/>
<dbReference type="KEGG" id="sam:MW2167"/>
<dbReference type="HOGENOM" id="CLU_037562_3_2_9"/>
<dbReference type="GO" id="GO:1990904">
    <property type="term" value="C:ribonucleoprotein complex"/>
    <property type="evidence" value="ECO:0007669"/>
    <property type="project" value="UniProtKB-KW"/>
</dbReference>
<dbReference type="GO" id="GO:0005840">
    <property type="term" value="C:ribosome"/>
    <property type="evidence" value="ECO:0007669"/>
    <property type="project" value="UniProtKB-KW"/>
</dbReference>
<dbReference type="GO" id="GO:0019843">
    <property type="term" value="F:rRNA binding"/>
    <property type="evidence" value="ECO:0007669"/>
    <property type="project" value="UniProtKB-UniRule"/>
</dbReference>
<dbReference type="GO" id="GO:0003735">
    <property type="term" value="F:structural constituent of ribosome"/>
    <property type="evidence" value="ECO:0007669"/>
    <property type="project" value="InterPro"/>
</dbReference>
<dbReference type="GO" id="GO:0006412">
    <property type="term" value="P:translation"/>
    <property type="evidence" value="ECO:0007669"/>
    <property type="project" value="UniProtKB-UniRule"/>
</dbReference>
<dbReference type="FunFam" id="3.30.70.330:FF:000001">
    <property type="entry name" value="50S ribosomal protein L23"/>
    <property type="match status" value="1"/>
</dbReference>
<dbReference type="Gene3D" id="3.30.70.330">
    <property type="match status" value="1"/>
</dbReference>
<dbReference type="HAMAP" id="MF_01369_B">
    <property type="entry name" value="Ribosomal_uL23_B"/>
    <property type="match status" value="1"/>
</dbReference>
<dbReference type="InterPro" id="IPR012677">
    <property type="entry name" value="Nucleotide-bd_a/b_plait_sf"/>
</dbReference>
<dbReference type="InterPro" id="IPR013025">
    <property type="entry name" value="Ribosomal_uL23-like"/>
</dbReference>
<dbReference type="InterPro" id="IPR012678">
    <property type="entry name" value="Ribosomal_uL23/eL15/eS24_sf"/>
</dbReference>
<dbReference type="NCBIfam" id="NF004363">
    <property type="entry name" value="PRK05738.2-4"/>
    <property type="match status" value="1"/>
</dbReference>
<dbReference type="PANTHER" id="PTHR11620">
    <property type="entry name" value="60S RIBOSOMAL PROTEIN L23A"/>
    <property type="match status" value="1"/>
</dbReference>
<dbReference type="Pfam" id="PF00276">
    <property type="entry name" value="Ribosomal_L23"/>
    <property type="match status" value="1"/>
</dbReference>
<dbReference type="SUPFAM" id="SSF54189">
    <property type="entry name" value="Ribosomal proteins S24e, L23 and L15e"/>
    <property type="match status" value="1"/>
</dbReference>
<proteinExistence type="evidence at protein level"/>
<name>RL23_STAAW</name>
<protein>
    <recommendedName>
        <fullName evidence="1">Large ribosomal subunit protein uL23</fullName>
    </recommendedName>
    <alternativeName>
        <fullName evidence="2">50S ribosomal protein L23</fullName>
    </alternativeName>
</protein>
<accession>Q7A078</accession>
<evidence type="ECO:0000255" key="1">
    <source>
        <dbReference type="HAMAP-Rule" id="MF_01369"/>
    </source>
</evidence>
<evidence type="ECO:0000305" key="2"/>